<keyword id="KW-0131">Cell cycle</keyword>
<keyword id="KW-0132">Cell division</keyword>
<keyword id="KW-0342">GTP-binding</keyword>
<keyword id="KW-0460">Magnesium</keyword>
<keyword id="KW-0479">Metal-binding</keyword>
<keyword id="KW-0547">Nucleotide-binding</keyword>
<keyword id="KW-0717">Septation</keyword>
<protein>
    <recommendedName>
        <fullName evidence="1">Probable GTP-binding protein EngB</fullName>
    </recommendedName>
</protein>
<name>ENGB_SHEB2</name>
<gene>
    <name evidence="1" type="primary">engB</name>
    <name type="ordered locus">Sbal223_4291</name>
</gene>
<proteinExistence type="inferred from homology"/>
<evidence type="ECO:0000255" key="1">
    <source>
        <dbReference type="HAMAP-Rule" id="MF_00321"/>
    </source>
</evidence>
<organism>
    <name type="scientific">Shewanella baltica (strain OS223)</name>
    <dbReference type="NCBI Taxonomy" id="407976"/>
    <lineage>
        <taxon>Bacteria</taxon>
        <taxon>Pseudomonadati</taxon>
        <taxon>Pseudomonadota</taxon>
        <taxon>Gammaproteobacteria</taxon>
        <taxon>Alteromonadales</taxon>
        <taxon>Shewanellaceae</taxon>
        <taxon>Shewanella</taxon>
    </lineage>
</organism>
<accession>B8EDT1</accession>
<comment type="function">
    <text evidence="1">Necessary for normal cell division and for the maintenance of normal septation.</text>
</comment>
<comment type="cofactor">
    <cofactor evidence="1">
        <name>Mg(2+)</name>
        <dbReference type="ChEBI" id="CHEBI:18420"/>
    </cofactor>
</comment>
<comment type="similarity">
    <text evidence="1">Belongs to the TRAFAC class TrmE-Era-EngA-EngB-Septin-like GTPase superfamily. EngB GTPase family.</text>
</comment>
<sequence length="219" mass="24286">MTESRIDFRRAKFLISAPDIAHLDQYLPGDVGVEIAFAGRSNAGKSSALNALTEQKSLARTSKTPGRTQLINVFELDAQRRLVDLPGYGFAQVPLALKNKWQQALGEYLQKRACLSGVVVLMDIRHPLKDLDMQMIEWAVASEIPVLALLTKSDKLAQSAKMKTVNEVRLALSEFGDWVQVEPFSSLKGTGKPKVLAILNEWCHPQWLTDELDAANNAE</sequence>
<dbReference type="EMBL" id="CP001252">
    <property type="protein sequence ID" value="ACK48757.1"/>
    <property type="molecule type" value="Genomic_DNA"/>
</dbReference>
<dbReference type="SMR" id="B8EDT1"/>
<dbReference type="KEGG" id="sbp:Sbal223_4291"/>
<dbReference type="HOGENOM" id="CLU_033732_1_2_6"/>
<dbReference type="Proteomes" id="UP000002507">
    <property type="component" value="Chromosome"/>
</dbReference>
<dbReference type="GO" id="GO:0005829">
    <property type="term" value="C:cytosol"/>
    <property type="evidence" value="ECO:0007669"/>
    <property type="project" value="TreeGrafter"/>
</dbReference>
<dbReference type="GO" id="GO:0005525">
    <property type="term" value="F:GTP binding"/>
    <property type="evidence" value="ECO:0007669"/>
    <property type="project" value="UniProtKB-UniRule"/>
</dbReference>
<dbReference type="GO" id="GO:0046872">
    <property type="term" value="F:metal ion binding"/>
    <property type="evidence" value="ECO:0007669"/>
    <property type="project" value="UniProtKB-KW"/>
</dbReference>
<dbReference type="GO" id="GO:0000917">
    <property type="term" value="P:division septum assembly"/>
    <property type="evidence" value="ECO:0007669"/>
    <property type="project" value="UniProtKB-KW"/>
</dbReference>
<dbReference type="CDD" id="cd01876">
    <property type="entry name" value="YihA_EngB"/>
    <property type="match status" value="1"/>
</dbReference>
<dbReference type="FunFam" id="3.40.50.300:FF:000098">
    <property type="entry name" value="Probable GTP-binding protein EngB"/>
    <property type="match status" value="1"/>
</dbReference>
<dbReference type="Gene3D" id="3.40.50.300">
    <property type="entry name" value="P-loop containing nucleotide triphosphate hydrolases"/>
    <property type="match status" value="1"/>
</dbReference>
<dbReference type="HAMAP" id="MF_00321">
    <property type="entry name" value="GTPase_EngB"/>
    <property type="match status" value="1"/>
</dbReference>
<dbReference type="InterPro" id="IPR030393">
    <property type="entry name" value="G_ENGB_dom"/>
</dbReference>
<dbReference type="InterPro" id="IPR006073">
    <property type="entry name" value="GTP-bd"/>
</dbReference>
<dbReference type="InterPro" id="IPR019987">
    <property type="entry name" value="GTP-bd_ribosome_bio_YsxC"/>
</dbReference>
<dbReference type="InterPro" id="IPR027417">
    <property type="entry name" value="P-loop_NTPase"/>
</dbReference>
<dbReference type="NCBIfam" id="TIGR03598">
    <property type="entry name" value="GTPase_YsxC"/>
    <property type="match status" value="1"/>
</dbReference>
<dbReference type="PANTHER" id="PTHR11649:SF13">
    <property type="entry name" value="ENGB-TYPE G DOMAIN-CONTAINING PROTEIN"/>
    <property type="match status" value="1"/>
</dbReference>
<dbReference type="PANTHER" id="PTHR11649">
    <property type="entry name" value="MSS1/TRME-RELATED GTP-BINDING PROTEIN"/>
    <property type="match status" value="1"/>
</dbReference>
<dbReference type="Pfam" id="PF01926">
    <property type="entry name" value="MMR_HSR1"/>
    <property type="match status" value="1"/>
</dbReference>
<dbReference type="SUPFAM" id="SSF52540">
    <property type="entry name" value="P-loop containing nucleoside triphosphate hydrolases"/>
    <property type="match status" value="1"/>
</dbReference>
<dbReference type="PROSITE" id="PS51706">
    <property type="entry name" value="G_ENGB"/>
    <property type="match status" value="1"/>
</dbReference>
<feature type="chain" id="PRO_1000189932" description="Probable GTP-binding protein EngB">
    <location>
        <begin position="1"/>
        <end position="219"/>
    </location>
</feature>
<feature type="domain" description="EngB-type G" evidence="1">
    <location>
        <begin position="31"/>
        <end position="205"/>
    </location>
</feature>
<feature type="binding site" evidence="1">
    <location>
        <begin position="39"/>
        <end position="46"/>
    </location>
    <ligand>
        <name>GTP</name>
        <dbReference type="ChEBI" id="CHEBI:37565"/>
    </ligand>
</feature>
<feature type="binding site" evidence="1">
    <location>
        <position position="46"/>
    </location>
    <ligand>
        <name>Mg(2+)</name>
        <dbReference type="ChEBI" id="CHEBI:18420"/>
    </ligand>
</feature>
<feature type="binding site" evidence="1">
    <location>
        <begin position="66"/>
        <end position="70"/>
    </location>
    <ligand>
        <name>GTP</name>
        <dbReference type="ChEBI" id="CHEBI:37565"/>
    </ligand>
</feature>
<feature type="binding site" evidence="1">
    <location>
        <position position="68"/>
    </location>
    <ligand>
        <name>Mg(2+)</name>
        <dbReference type="ChEBI" id="CHEBI:18420"/>
    </ligand>
</feature>
<feature type="binding site" evidence="1">
    <location>
        <begin position="84"/>
        <end position="87"/>
    </location>
    <ligand>
        <name>GTP</name>
        <dbReference type="ChEBI" id="CHEBI:37565"/>
    </ligand>
</feature>
<feature type="binding site" evidence="1">
    <location>
        <begin position="151"/>
        <end position="154"/>
    </location>
    <ligand>
        <name>GTP</name>
        <dbReference type="ChEBI" id="CHEBI:37565"/>
    </ligand>
</feature>
<feature type="binding site" evidence="1">
    <location>
        <begin position="184"/>
        <end position="186"/>
    </location>
    <ligand>
        <name>GTP</name>
        <dbReference type="ChEBI" id="CHEBI:37565"/>
    </ligand>
</feature>
<reference key="1">
    <citation type="submission" date="2008-12" db="EMBL/GenBank/DDBJ databases">
        <title>Complete sequence of chromosome of Shewanella baltica OS223.</title>
        <authorList>
            <consortium name="US DOE Joint Genome Institute"/>
            <person name="Lucas S."/>
            <person name="Copeland A."/>
            <person name="Lapidus A."/>
            <person name="Glavina del Rio T."/>
            <person name="Dalin E."/>
            <person name="Tice H."/>
            <person name="Bruce D."/>
            <person name="Goodwin L."/>
            <person name="Pitluck S."/>
            <person name="Chertkov O."/>
            <person name="Meincke L."/>
            <person name="Brettin T."/>
            <person name="Detter J.C."/>
            <person name="Han C."/>
            <person name="Kuske C.R."/>
            <person name="Larimer F."/>
            <person name="Land M."/>
            <person name="Hauser L."/>
            <person name="Kyrpides N."/>
            <person name="Ovchinnikova G."/>
            <person name="Brettar I."/>
            <person name="Rodrigues J."/>
            <person name="Konstantinidis K."/>
            <person name="Tiedje J."/>
        </authorList>
    </citation>
    <scope>NUCLEOTIDE SEQUENCE [LARGE SCALE GENOMIC DNA]</scope>
    <source>
        <strain>OS223</strain>
    </source>
</reference>